<keyword id="KW-1035">Host cytoplasm</keyword>
<keyword id="KW-1048">Host nucleus</keyword>
<keyword id="KW-0489">Methyltransferase</keyword>
<keyword id="KW-0949">S-adenosyl-L-methionine</keyword>
<keyword id="KW-0964">Secreted</keyword>
<keyword id="KW-0800">Toxin</keyword>
<keyword id="KW-0808">Transferase</keyword>
<keyword id="KW-0843">Virulence</keyword>
<organism>
    <name type="scientific">Shigella flexneri</name>
    <dbReference type="NCBI Taxonomy" id="623"/>
    <lineage>
        <taxon>Bacteria</taxon>
        <taxon>Pseudomonadati</taxon>
        <taxon>Pseudomonadota</taxon>
        <taxon>Gammaproteobacteria</taxon>
        <taxon>Enterobacterales</taxon>
        <taxon>Enterobacteriaceae</taxon>
        <taxon>Shigella</taxon>
    </lineage>
</organism>
<reference key="1">
    <citation type="submission" date="2018-05" db="EMBL/GenBank/DDBJ databases">
        <authorList>
            <person name="Ashton P.M."/>
            <person name="Dallman T."/>
            <person name="Nair S."/>
            <person name="De Pinna E."/>
            <person name="Peters T."/>
            <person name="Grant K."/>
        </authorList>
    </citation>
    <scope>NUCLEOTIDE SEQUENCE [LARGE SCALE GENOMIC DNA]</scope>
    <source>
        <strain>397720</strain>
    </source>
</reference>
<reference key="2">
    <citation type="journal article" date="2010" name="PLoS Pathog.">
        <title>The type III effectors NleE and NleB from enteropathogenic E. coli and OspZ from Shigella block nuclear translocation of NF-kappaB p65.</title>
        <authorList>
            <person name="Newton H.J."/>
            <person name="Pearson J.S."/>
            <person name="Badea L."/>
            <person name="Kelly M."/>
            <person name="Lucas M."/>
            <person name="Holloway G."/>
            <person name="Wagstaff K.M."/>
            <person name="Dunstone M.A."/>
            <person name="Sloan J."/>
            <person name="Whisstock J.C."/>
            <person name="Kaper J.B."/>
            <person name="Robins-Browne R.M."/>
            <person name="Jans D.A."/>
            <person name="Frankel G."/>
            <person name="Phillips A.D."/>
            <person name="Coulson B.S."/>
            <person name="Hartland E.L."/>
        </authorList>
    </citation>
    <scope>FUNCTION</scope>
    <source>
        <strain>0106164 / Serotype 6</strain>
    </source>
</reference>
<reference key="3">
    <citation type="journal article" date="2016" name="J. Biol. Chem.">
        <title>Identification of a distinct substrate-binding domain in the bacterial cysteine methyltransferase effectors NleE and OspZ.</title>
        <authorList>
            <person name="Zhang Y."/>
            <person name="Muehlen S."/>
            <person name="Oates C.V."/>
            <person name="Pearson J.S."/>
            <person name="Hartland E.L."/>
        </authorList>
    </citation>
    <scope>FUNCTION</scope>
    <scope>CATALYTIC ACTIVITY</scope>
    <scope>MUTAGENESIS OF 49-GLY--ARG-52</scope>
    <source>
        <strain>0106164 / Serotype 6</strain>
    </source>
</reference>
<protein>
    <recommendedName>
        <fullName evidence="6">Cysteine S-methyltransferase OspZ</fullName>
        <ecNumber evidence="4">2.1.1.-</ecNumber>
    </recommendedName>
    <alternativeName>
        <fullName evidence="5">Effector protein OspZ</fullName>
    </alternativeName>
</protein>
<evidence type="ECO:0000250" key="1">
    <source>
        <dbReference type="UniProtKB" id="Q2TH00"/>
    </source>
</evidence>
<evidence type="ECO:0000250" key="2">
    <source>
        <dbReference type="UniProtKB" id="Q7DBA6"/>
    </source>
</evidence>
<evidence type="ECO:0000269" key="3">
    <source>
    </source>
</evidence>
<evidence type="ECO:0000269" key="4">
    <source>
    </source>
</evidence>
<evidence type="ECO:0000303" key="5">
    <source>
    </source>
</evidence>
<evidence type="ECO:0000305" key="6"/>
<evidence type="ECO:0000312" key="7">
    <source>
        <dbReference type="EMBL" id="EAA0484367.1"/>
    </source>
</evidence>
<name>OSPZ_SHIFL</name>
<comment type="function">
    <text evidence="3 4">Cysteine methyltransferase effector that inhibits host cell NF-kappa-B activation by preventing nuclear translocation of host protein RELA/p65 (PubMed:20485572). Acts by mediating cysteine methylation of host proteins TAB2 and TAB3: methylation of a conserved cysteine residue of the RanBP2-type zinc finger (NZF) of TAB2 and TAB3 disrupts zinc-binding, thereby inactivating the ubiquitin chain-binding activity of TAB2 and TAB3, leading to NF-kappa-B inactivation (PubMed:27445336). Also mediates cysteine methylation of host protein ZRANB3, inactivating its ability to bind ubiquitin chains (PubMed:27445336).</text>
</comment>
<comment type="catalytic activity">
    <reaction evidence="4">
        <text>L-cysteinyl-[protein] + S-adenosyl-L-methionine = S-methyl-L-cysteinyl-[protein] + S-adenosyl-L-homocysteine + H(+)</text>
        <dbReference type="Rhea" id="RHEA:66544"/>
        <dbReference type="Rhea" id="RHEA-COMP:10131"/>
        <dbReference type="Rhea" id="RHEA-COMP:10132"/>
        <dbReference type="ChEBI" id="CHEBI:15378"/>
        <dbReference type="ChEBI" id="CHEBI:29950"/>
        <dbReference type="ChEBI" id="CHEBI:57856"/>
        <dbReference type="ChEBI" id="CHEBI:59789"/>
        <dbReference type="ChEBI" id="CHEBI:82612"/>
    </reaction>
    <physiologicalReaction direction="left-to-right" evidence="4">
        <dbReference type="Rhea" id="RHEA:66545"/>
    </physiologicalReaction>
</comment>
<comment type="subunit">
    <text evidence="2">Monomer.</text>
</comment>
<comment type="subcellular location">
    <subcellularLocation>
        <location evidence="1">Secreted</location>
    </subcellularLocation>
    <subcellularLocation>
        <location evidence="1">Host cytoplasm</location>
    </subcellularLocation>
    <subcellularLocation>
        <location evidence="1">Host nucleus</location>
    </subcellularLocation>
    <text evidence="1">Secreted via the type III secretion system (T3SS). Mainly localizes in the cytoplasm of the infected cells, and occasionaly in the host nucleus.</text>
</comment>
<comment type="similarity">
    <text evidence="6">Belongs to the NleE/OspZ family.</text>
</comment>
<accession>A0A3T2V133</accession>
<dbReference type="EC" id="2.1.1.-" evidence="4"/>
<dbReference type="EMBL" id="AAAAHL010000236">
    <property type="protein sequence ID" value="EAA0484367.1"/>
    <property type="molecule type" value="Genomic_DNA"/>
</dbReference>
<dbReference type="RefSeq" id="WP_000625262.1">
    <property type="nucleotide sequence ID" value="NZ_QXIB01000390.1"/>
</dbReference>
<dbReference type="SMR" id="A0A3T2V133"/>
<dbReference type="Proteomes" id="UP000839563">
    <property type="component" value="Unassembled WGS sequence"/>
</dbReference>
<dbReference type="GO" id="GO:0005576">
    <property type="term" value="C:extracellular region"/>
    <property type="evidence" value="ECO:0007669"/>
    <property type="project" value="UniProtKB-SubCell"/>
</dbReference>
<dbReference type="GO" id="GO:0030430">
    <property type="term" value="C:host cell cytoplasm"/>
    <property type="evidence" value="ECO:0007669"/>
    <property type="project" value="UniProtKB-SubCell"/>
</dbReference>
<dbReference type="GO" id="GO:0042025">
    <property type="term" value="C:host cell nucleus"/>
    <property type="evidence" value="ECO:0007669"/>
    <property type="project" value="UniProtKB-SubCell"/>
</dbReference>
<dbReference type="GO" id="GO:0106363">
    <property type="term" value="F:protein-cysteine methyltransferase activity"/>
    <property type="evidence" value="ECO:0000314"/>
    <property type="project" value="UniProtKB"/>
</dbReference>
<dbReference type="GO" id="GO:0090729">
    <property type="term" value="F:toxin activity"/>
    <property type="evidence" value="ECO:0007669"/>
    <property type="project" value="UniProtKB-KW"/>
</dbReference>
<dbReference type="GO" id="GO:0032259">
    <property type="term" value="P:methylation"/>
    <property type="evidence" value="ECO:0007669"/>
    <property type="project" value="UniProtKB-KW"/>
</dbReference>
<dbReference type="GO" id="GO:0085034">
    <property type="term" value="P:symbiont-mediated suppression of host NF-kappaB cascade"/>
    <property type="evidence" value="ECO:0000314"/>
    <property type="project" value="UniProtKB"/>
</dbReference>
<dbReference type="InterPro" id="IPR048901">
    <property type="entry name" value="NleE/OspZ"/>
</dbReference>
<dbReference type="NCBIfam" id="NF033830">
    <property type="entry name" value="NleE_fam_methyl"/>
    <property type="match status" value="1"/>
</dbReference>
<dbReference type="Pfam" id="PF20798">
    <property type="entry name" value="NleE"/>
    <property type="match status" value="1"/>
</dbReference>
<gene>
    <name evidence="5" type="primary">ospZ</name>
    <name evidence="7" type="ORF">DK174_21500</name>
</gene>
<proteinExistence type="evidence at protein level"/>
<feature type="chain" id="PRO_0000452526" description="Cysteine S-methyltransferase OspZ">
    <location>
        <begin position="1"/>
        <end position="230"/>
    </location>
</feature>
<feature type="region of interest" description="Interaction with host proteins TAB2, TAB3 and ZRANB3" evidence="4">
    <location>
        <begin position="49"/>
        <end position="52"/>
    </location>
</feature>
<feature type="binding site" evidence="2">
    <location>
        <position position="92"/>
    </location>
    <ligand>
        <name>S-adenosyl-L-methionine</name>
        <dbReference type="ChEBI" id="CHEBI:59789"/>
    </ligand>
</feature>
<feature type="binding site" evidence="2">
    <location>
        <position position="98"/>
    </location>
    <ligand>
        <name>S-adenosyl-L-methionine</name>
        <dbReference type="ChEBI" id="CHEBI:59789"/>
    </ligand>
</feature>
<feature type="binding site" evidence="2">
    <location>
        <position position="107"/>
    </location>
    <ligand>
        <name>S-adenosyl-L-methionine</name>
        <dbReference type="ChEBI" id="CHEBI:59789"/>
    </ligand>
</feature>
<feature type="binding site" evidence="2">
    <location>
        <position position="111"/>
    </location>
    <ligand>
        <name>S-adenosyl-L-methionine</name>
        <dbReference type="ChEBI" id="CHEBI:59789"/>
    </ligand>
</feature>
<feature type="binding site" evidence="2">
    <location>
        <position position="204"/>
    </location>
    <ligand>
        <name>S-adenosyl-L-methionine</name>
        <dbReference type="ChEBI" id="CHEBI:59789"/>
    </ligand>
</feature>
<feature type="binding site" evidence="2">
    <location>
        <position position="208"/>
    </location>
    <ligand>
        <name>S-adenosyl-L-methionine</name>
        <dbReference type="ChEBI" id="CHEBI:59789"/>
    </ligand>
</feature>
<feature type="mutagenesis site" description="Abolished interaction with host proteins TAB2, TAB3 and ZRANB3." evidence="4">
    <original>GITR</original>
    <variation>AAAA</variation>
    <location>
        <begin position="49"/>
        <end position="52"/>
    </location>
</feature>
<sequence length="230" mass="26904">MISPIKNIKNVFPINTANTEYIVRNIYPRVEHGYFNESPNIYDKKYISGITRSMAQLKIEEFINEKSRRLNYMKTMYSPCPEDFQPISRDEASIPEGSWLTVISGKRPMGQFSVDSLYHPDLHALCELPEISCKIFPKENSDFLYIIVVFRNDSPQGELRANRFIELYDIKREIMQVLRDESPELKSIKSEIIIAREMGELFSYASEEIDSYIKQMNDRFSQIKARMSVT</sequence>